<evidence type="ECO:0000255" key="1">
    <source>
        <dbReference type="HAMAP-Rule" id="MF_01006"/>
    </source>
</evidence>
<keyword id="KW-0046">Antibiotic resistance</keyword>
<keyword id="KW-0997">Cell inner membrane</keyword>
<keyword id="KW-1003">Cell membrane</keyword>
<keyword id="KW-0133">Cell shape</keyword>
<keyword id="KW-0961">Cell wall biogenesis/degradation</keyword>
<keyword id="KW-0378">Hydrolase</keyword>
<keyword id="KW-0472">Membrane</keyword>
<keyword id="KW-0573">Peptidoglycan synthesis</keyword>
<keyword id="KW-0812">Transmembrane</keyword>
<keyword id="KW-1133">Transmembrane helix</keyword>
<gene>
    <name evidence="1" type="primary">uppP</name>
    <name type="synonym">bacA</name>
    <name type="synonym">upk</name>
    <name type="ordered locus">SYNW2189</name>
</gene>
<dbReference type="EC" id="3.6.1.27" evidence="1"/>
<dbReference type="EMBL" id="BX569694">
    <property type="protein sequence ID" value="CAE08704.1"/>
    <property type="molecule type" value="Genomic_DNA"/>
</dbReference>
<dbReference type="RefSeq" id="WP_011129044.1">
    <property type="nucleotide sequence ID" value="NC_005070.1"/>
</dbReference>
<dbReference type="SMR" id="Q7U482"/>
<dbReference type="STRING" id="84588.SYNW2189"/>
<dbReference type="KEGG" id="syw:SYNW2189"/>
<dbReference type="eggNOG" id="COG1968">
    <property type="taxonomic scope" value="Bacteria"/>
</dbReference>
<dbReference type="HOGENOM" id="CLU_060296_1_0_3"/>
<dbReference type="Proteomes" id="UP000001422">
    <property type="component" value="Chromosome"/>
</dbReference>
<dbReference type="GO" id="GO:0005886">
    <property type="term" value="C:plasma membrane"/>
    <property type="evidence" value="ECO:0007669"/>
    <property type="project" value="UniProtKB-SubCell"/>
</dbReference>
<dbReference type="GO" id="GO:0050380">
    <property type="term" value="F:undecaprenyl-diphosphatase activity"/>
    <property type="evidence" value="ECO:0007669"/>
    <property type="project" value="UniProtKB-UniRule"/>
</dbReference>
<dbReference type="GO" id="GO:0071555">
    <property type="term" value="P:cell wall organization"/>
    <property type="evidence" value="ECO:0007669"/>
    <property type="project" value="UniProtKB-KW"/>
</dbReference>
<dbReference type="GO" id="GO:0009252">
    <property type="term" value="P:peptidoglycan biosynthetic process"/>
    <property type="evidence" value="ECO:0007669"/>
    <property type="project" value="UniProtKB-KW"/>
</dbReference>
<dbReference type="GO" id="GO:0008360">
    <property type="term" value="P:regulation of cell shape"/>
    <property type="evidence" value="ECO:0007669"/>
    <property type="project" value="UniProtKB-KW"/>
</dbReference>
<dbReference type="GO" id="GO:0046677">
    <property type="term" value="P:response to antibiotic"/>
    <property type="evidence" value="ECO:0007669"/>
    <property type="project" value="UniProtKB-UniRule"/>
</dbReference>
<dbReference type="HAMAP" id="MF_01006">
    <property type="entry name" value="Undec_diphosphatase"/>
    <property type="match status" value="1"/>
</dbReference>
<dbReference type="InterPro" id="IPR003824">
    <property type="entry name" value="UppP"/>
</dbReference>
<dbReference type="NCBIfam" id="NF001394">
    <property type="entry name" value="PRK00281.2-5"/>
    <property type="match status" value="1"/>
</dbReference>
<dbReference type="NCBIfam" id="TIGR00753">
    <property type="entry name" value="undec_PP_bacA"/>
    <property type="match status" value="1"/>
</dbReference>
<dbReference type="PANTHER" id="PTHR30622">
    <property type="entry name" value="UNDECAPRENYL-DIPHOSPHATASE"/>
    <property type="match status" value="1"/>
</dbReference>
<dbReference type="PANTHER" id="PTHR30622:SF4">
    <property type="entry name" value="UNDECAPRENYL-DIPHOSPHATASE"/>
    <property type="match status" value="1"/>
</dbReference>
<dbReference type="Pfam" id="PF02673">
    <property type="entry name" value="BacA"/>
    <property type="match status" value="1"/>
</dbReference>
<name>UPPP_PARMW</name>
<protein>
    <recommendedName>
        <fullName evidence="1">Undecaprenyl-diphosphatase</fullName>
        <ecNumber evidence="1">3.6.1.27</ecNumber>
    </recommendedName>
    <alternativeName>
        <fullName evidence="1">Bacitracin resistance protein</fullName>
    </alternativeName>
    <alternativeName>
        <fullName evidence="1">Undecaprenyl pyrophosphate phosphatase</fullName>
    </alternativeName>
</protein>
<comment type="function">
    <text evidence="1">Catalyzes the dephosphorylation of undecaprenyl diphosphate (UPP). Confers resistance to bacitracin.</text>
</comment>
<comment type="catalytic activity">
    <reaction evidence="1">
        <text>di-trans,octa-cis-undecaprenyl diphosphate + H2O = di-trans,octa-cis-undecaprenyl phosphate + phosphate + H(+)</text>
        <dbReference type="Rhea" id="RHEA:28094"/>
        <dbReference type="ChEBI" id="CHEBI:15377"/>
        <dbReference type="ChEBI" id="CHEBI:15378"/>
        <dbReference type="ChEBI" id="CHEBI:43474"/>
        <dbReference type="ChEBI" id="CHEBI:58405"/>
        <dbReference type="ChEBI" id="CHEBI:60392"/>
        <dbReference type="EC" id="3.6.1.27"/>
    </reaction>
</comment>
<comment type="subcellular location">
    <subcellularLocation>
        <location evidence="1">Cell inner membrane</location>
        <topology evidence="1">Multi-pass membrane protein</topology>
    </subcellularLocation>
</comment>
<comment type="miscellaneous">
    <text>Bacitracin is thought to be involved in the inhibition of peptidoglycan synthesis by sequestering undecaprenyl diphosphate, thereby reducing the pool of lipid carrier available.</text>
</comment>
<comment type="similarity">
    <text evidence="1">Belongs to the UppP family.</text>
</comment>
<proteinExistence type="inferred from homology"/>
<accession>Q7U482</accession>
<organism>
    <name type="scientific">Parasynechococcus marenigrum (strain WH8102)</name>
    <dbReference type="NCBI Taxonomy" id="84588"/>
    <lineage>
        <taxon>Bacteria</taxon>
        <taxon>Bacillati</taxon>
        <taxon>Cyanobacteriota</taxon>
        <taxon>Cyanophyceae</taxon>
        <taxon>Synechococcales</taxon>
        <taxon>Prochlorococcaceae</taxon>
        <taxon>Parasynechococcus</taxon>
        <taxon>Parasynechococcus marenigrum</taxon>
    </lineage>
</organism>
<sequence>MADPSASLGLWEACWRDLVLGIVQGLTEFLPISSTAHLKVVPVLLDWGDPGVSVTAAIQLGSIVAVIAYFRRDLAQVMQGISKAFRHGQWREPEARLGIAMAVGTLPILAVGLAIKLFWDEGYETSPLRSVPSIAVVSIVMALLLAVAERMGPRRKQLSDVSGRDGLVVGLAQVLALIPGVSRSGSTLTASLLDGWQRADAARFSFLLGIPAITIAGIVELKDALAATADAGPLPLVIGILAATVVSWLAIDWLLKFLQRHSTWLFVAYRLLFGVGLLAWWSIHGAH</sequence>
<reference key="1">
    <citation type="journal article" date="2003" name="Nature">
        <title>The genome of a motile marine Synechococcus.</title>
        <authorList>
            <person name="Palenik B."/>
            <person name="Brahamsha B."/>
            <person name="Larimer F.W."/>
            <person name="Land M.L."/>
            <person name="Hauser L."/>
            <person name="Chain P."/>
            <person name="Lamerdin J.E."/>
            <person name="Regala W."/>
            <person name="Allen E.E."/>
            <person name="McCarren J."/>
            <person name="Paulsen I.T."/>
            <person name="Dufresne A."/>
            <person name="Partensky F."/>
            <person name="Webb E.A."/>
            <person name="Waterbury J."/>
        </authorList>
    </citation>
    <scope>NUCLEOTIDE SEQUENCE [LARGE SCALE GENOMIC DNA]</scope>
    <source>
        <strain>WH8102</strain>
    </source>
</reference>
<feature type="chain" id="PRO_0000151225" description="Undecaprenyl-diphosphatase">
    <location>
        <begin position="1"/>
        <end position="287"/>
    </location>
</feature>
<feature type="transmembrane region" description="Helical" evidence="1">
    <location>
        <begin position="50"/>
        <end position="70"/>
    </location>
</feature>
<feature type="transmembrane region" description="Helical" evidence="1">
    <location>
        <begin position="99"/>
        <end position="119"/>
    </location>
</feature>
<feature type="transmembrane region" description="Helical" evidence="1">
    <location>
        <begin position="128"/>
        <end position="148"/>
    </location>
</feature>
<feature type="transmembrane region" description="Helical" evidence="1">
    <location>
        <begin position="206"/>
        <end position="226"/>
    </location>
</feature>
<feature type="transmembrane region" description="Helical" evidence="1">
    <location>
        <begin position="231"/>
        <end position="251"/>
    </location>
</feature>
<feature type="transmembrane region" description="Helical" evidence="1">
    <location>
        <begin position="263"/>
        <end position="283"/>
    </location>
</feature>